<organism>
    <name type="scientific">Arabidopsis thaliana</name>
    <name type="common">Mouse-ear cress</name>
    <dbReference type="NCBI Taxonomy" id="3702"/>
    <lineage>
        <taxon>Eukaryota</taxon>
        <taxon>Viridiplantae</taxon>
        <taxon>Streptophyta</taxon>
        <taxon>Embryophyta</taxon>
        <taxon>Tracheophyta</taxon>
        <taxon>Spermatophyta</taxon>
        <taxon>Magnoliopsida</taxon>
        <taxon>eudicotyledons</taxon>
        <taxon>Gunneridae</taxon>
        <taxon>Pentapetalae</taxon>
        <taxon>rosids</taxon>
        <taxon>malvids</taxon>
        <taxon>Brassicales</taxon>
        <taxon>Brassicaceae</taxon>
        <taxon>Camelineae</taxon>
        <taxon>Arabidopsis</taxon>
    </lineage>
</organism>
<keyword id="KW-0238">DNA-binding</keyword>
<keyword id="KW-0539">Nucleus</keyword>
<keyword id="KW-0597">Phosphoprotein</keyword>
<keyword id="KW-1185">Reference proteome</keyword>
<accession>Q84JK2</accession>
<accession>O65627</accession>
<accession>Q84JC9</accession>
<accession>Q84K49</accession>
<accession>Q84K53</accession>
<evidence type="ECO:0000255" key="1">
    <source>
        <dbReference type="PROSITE-ProRule" id="PRU00978"/>
    </source>
</evidence>
<evidence type="ECO:0000256" key="2">
    <source>
        <dbReference type="SAM" id="MobiDB-lite"/>
    </source>
</evidence>
<evidence type="ECO:0000269" key="3">
    <source>
    </source>
</evidence>
<evidence type="ECO:0000269" key="4">
    <source>
    </source>
</evidence>
<evidence type="ECO:0000269" key="5">
    <source>
    </source>
</evidence>
<evidence type="ECO:0000303" key="6">
    <source>
    </source>
</evidence>
<evidence type="ECO:0000303" key="7">
    <source>
    </source>
</evidence>
<evidence type="ECO:0000305" key="8"/>
<evidence type="ECO:0000312" key="9">
    <source>
        <dbReference type="Araport" id="AT4G35900"/>
    </source>
</evidence>
<evidence type="ECO:0000312" key="10">
    <source>
        <dbReference type="EMBL" id="CAA18484.1"/>
    </source>
</evidence>
<evidence type="ECO:0000312" key="11">
    <source>
        <dbReference type="EMBL" id="CAA21476.1"/>
    </source>
</evidence>
<name>FD_ARATH</name>
<proteinExistence type="evidence at protein level"/>
<dbReference type="EMBL" id="AB105818">
    <property type="protein sequence ID" value="BAC65864.1"/>
    <property type="molecule type" value="mRNA"/>
</dbReference>
<dbReference type="EMBL" id="AB105819">
    <property type="protein sequence ID" value="BAC65865.1"/>
    <property type="molecule type" value="mRNA"/>
</dbReference>
<dbReference type="EMBL" id="AB105820">
    <property type="protein sequence ID" value="BAC65866.1"/>
    <property type="molecule type" value="mRNA"/>
</dbReference>
<dbReference type="EMBL" id="AB105821">
    <property type="protein sequence ID" value="BAC65867.1"/>
    <property type="molecule type" value="mRNA"/>
</dbReference>
<dbReference type="EMBL" id="AB105822">
    <property type="protein sequence ID" value="BAC65868.1"/>
    <property type="molecule type" value="mRNA"/>
</dbReference>
<dbReference type="EMBL" id="AB105823">
    <property type="protein sequence ID" value="BAC65869.1"/>
    <property type="molecule type" value="Genomic_DNA"/>
</dbReference>
<dbReference type="EMBL" id="AB105824">
    <property type="protein sequence ID" value="BAC65870.1"/>
    <property type="molecule type" value="Genomic_DNA"/>
</dbReference>
<dbReference type="EMBL" id="AB105825">
    <property type="protein sequence ID" value="BAC65871.1"/>
    <property type="molecule type" value="Genomic_DNA"/>
</dbReference>
<dbReference type="EMBL" id="AB105826">
    <property type="protein sequence ID" value="BAC65872.1"/>
    <property type="molecule type" value="Genomic_DNA"/>
</dbReference>
<dbReference type="EMBL" id="AB105827">
    <property type="protein sequence ID" value="BAC65873.1"/>
    <property type="molecule type" value="Genomic_DNA"/>
</dbReference>
<dbReference type="EMBL" id="AL022373">
    <property type="protein sequence ID" value="CAA18484.1"/>
    <property type="status" value="ALT_SEQ"/>
    <property type="molecule type" value="Genomic_DNA"/>
</dbReference>
<dbReference type="EMBL" id="AL031986">
    <property type="protein sequence ID" value="CAA21476.1"/>
    <property type="status" value="ALT_SEQ"/>
    <property type="molecule type" value="Genomic_DNA"/>
</dbReference>
<dbReference type="EMBL" id="AL161588">
    <property type="protein sequence ID" value="CAB81499.1"/>
    <property type="status" value="ALT_SEQ"/>
    <property type="molecule type" value="Genomic_DNA"/>
</dbReference>
<dbReference type="EMBL" id="CP002687">
    <property type="protein sequence ID" value="AEE86586.1"/>
    <property type="molecule type" value="Genomic_DNA"/>
</dbReference>
<dbReference type="EMBL" id="BN000021">
    <property type="protein sequence ID" value="CAD29860.1"/>
    <property type="molecule type" value="Genomic_DNA"/>
</dbReference>
<dbReference type="PIR" id="T04700">
    <property type="entry name" value="T04700"/>
</dbReference>
<dbReference type="RefSeq" id="NP_001329774.1">
    <property type="nucleotide sequence ID" value="NM_001342379.1"/>
</dbReference>
<dbReference type="RefSeq" id="NP_195315.3">
    <property type="nucleotide sequence ID" value="NM_119756.5"/>
</dbReference>
<dbReference type="SMR" id="Q84JK2"/>
<dbReference type="BioGRID" id="15026">
    <property type="interactions" value="11"/>
</dbReference>
<dbReference type="FunCoup" id="Q84JK2">
    <property type="interactions" value="344"/>
</dbReference>
<dbReference type="IntAct" id="Q84JK2">
    <property type="interactions" value="4"/>
</dbReference>
<dbReference type="STRING" id="3702.Q84JK2"/>
<dbReference type="iPTMnet" id="Q84JK2"/>
<dbReference type="PaxDb" id="3702-AT4G35900.1"/>
<dbReference type="EnsemblPlants" id="AT4G35900.1">
    <property type="protein sequence ID" value="AT4G35900.1"/>
    <property type="gene ID" value="AT4G35900"/>
</dbReference>
<dbReference type="GeneID" id="829744"/>
<dbReference type="Gramene" id="AT4G35900.1">
    <property type="protein sequence ID" value="AT4G35900.1"/>
    <property type="gene ID" value="AT4G35900"/>
</dbReference>
<dbReference type="KEGG" id="ath:AT4G35900"/>
<dbReference type="Araport" id="AT4G35900"/>
<dbReference type="TAIR" id="AT4G35900">
    <property type="gene designation" value="FD"/>
</dbReference>
<dbReference type="eggNOG" id="ENOG502RZGX">
    <property type="taxonomic scope" value="Eukaryota"/>
</dbReference>
<dbReference type="HOGENOM" id="CLU_085189_0_0_1"/>
<dbReference type="InParanoid" id="Q84JK2"/>
<dbReference type="PhylomeDB" id="Q84JK2"/>
<dbReference type="PRO" id="PR:Q84JK2"/>
<dbReference type="Proteomes" id="UP000006548">
    <property type="component" value="Chromosome 4"/>
</dbReference>
<dbReference type="ExpressionAtlas" id="Q84JK2">
    <property type="expression patterns" value="baseline and differential"/>
</dbReference>
<dbReference type="GO" id="GO:0005634">
    <property type="term" value="C:nucleus"/>
    <property type="evidence" value="ECO:0000314"/>
    <property type="project" value="UniProtKB"/>
</dbReference>
<dbReference type="GO" id="GO:0003677">
    <property type="term" value="F:DNA binding"/>
    <property type="evidence" value="ECO:0007669"/>
    <property type="project" value="UniProtKB-KW"/>
</dbReference>
<dbReference type="GO" id="GO:0003700">
    <property type="term" value="F:DNA-binding transcription factor activity"/>
    <property type="evidence" value="ECO:0000250"/>
    <property type="project" value="TAIR"/>
</dbReference>
<dbReference type="GO" id="GO:0009648">
    <property type="term" value="P:photoperiodism"/>
    <property type="evidence" value="ECO:0000315"/>
    <property type="project" value="TAIR"/>
</dbReference>
<dbReference type="GO" id="GO:0045893">
    <property type="term" value="P:positive regulation of DNA-templated transcription"/>
    <property type="evidence" value="ECO:0000315"/>
    <property type="project" value="TAIR"/>
</dbReference>
<dbReference type="GO" id="GO:0009911">
    <property type="term" value="P:positive regulation of flower development"/>
    <property type="evidence" value="ECO:0000315"/>
    <property type="project" value="TAIR"/>
</dbReference>
<dbReference type="GO" id="GO:0006355">
    <property type="term" value="P:regulation of DNA-templated transcription"/>
    <property type="evidence" value="ECO:0000314"/>
    <property type="project" value="UniProtKB"/>
</dbReference>
<dbReference type="GO" id="GO:0009909">
    <property type="term" value="P:regulation of flower development"/>
    <property type="evidence" value="ECO:0000316"/>
    <property type="project" value="TAIR"/>
</dbReference>
<dbReference type="GO" id="GO:2000028">
    <property type="term" value="P:regulation of photoperiodism, flowering"/>
    <property type="evidence" value="ECO:0000315"/>
    <property type="project" value="UniProtKB"/>
</dbReference>
<dbReference type="CDD" id="cd14707">
    <property type="entry name" value="bZIP_plant_BZIP46"/>
    <property type="match status" value="1"/>
</dbReference>
<dbReference type="FunFam" id="1.20.5.170:FF:000036">
    <property type="entry name" value="ABSCISIC ACID-INSENSITIVE 5-like protein 2"/>
    <property type="match status" value="1"/>
</dbReference>
<dbReference type="Gene3D" id="1.20.5.170">
    <property type="match status" value="1"/>
</dbReference>
<dbReference type="InterPro" id="IPR004827">
    <property type="entry name" value="bZIP"/>
</dbReference>
<dbReference type="InterPro" id="IPR043452">
    <property type="entry name" value="BZIP46-like"/>
</dbReference>
<dbReference type="InterPro" id="IPR046347">
    <property type="entry name" value="bZIP_sf"/>
</dbReference>
<dbReference type="PANTHER" id="PTHR22952">
    <property type="entry name" value="CAMP-RESPONSE ELEMENT BINDING PROTEIN-RELATED"/>
    <property type="match status" value="1"/>
</dbReference>
<dbReference type="PANTHER" id="PTHR22952:SF433">
    <property type="entry name" value="PROTEIN FD"/>
    <property type="match status" value="1"/>
</dbReference>
<dbReference type="Pfam" id="PF00170">
    <property type="entry name" value="bZIP_1"/>
    <property type="match status" value="1"/>
</dbReference>
<dbReference type="SMART" id="SM00338">
    <property type="entry name" value="BRLZ"/>
    <property type="match status" value="1"/>
</dbReference>
<dbReference type="SUPFAM" id="SSF57959">
    <property type="entry name" value="Leucine zipper domain"/>
    <property type="match status" value="1"/>
</dbReference>
<dbReference type="PROSITE" id="PS50217">
    <property type="entry name" value="BZIP"/>
    <property type="match status" value="1"/>
</dbReference>
<dbReference type="PROSITE" id="PS00036">
    <property type="entry name" value="BZIP_BASIC"/>
    <property type="match status" value="1"/>
</dbReference>
<comment type="function">
    <text evidence="3 4">Transcription factor required for the transition to flowering promoted by FT.</text>
</comment>
<comment type="subunit">
    <text evidence="3 4 5">Self-interacts (PubMed:16099979). Interacts with FT and FDP/BZIP27 (PubMed:16099979, PubMed:16099980, PubMed:25661797). Interacts with GRF3 and GRF4, and in a calcium-independent manner, with CPK6 and CPK33 (PubMed:25661797).</text>
</comment>
<comment type="interaction">
    <interactant intactId="EBI-636507">
        <id>Q84JK2</id>
    </interactant>
    <interactant intactId="EBI-636490">
        <id>Q9SXZ2</id>
        <label>FT</label>
    </interactant>
    <organismsDiffer>false</organismsDiffer>
    <experiments>4</experiments>
</comment>
<comment type="subcellular location">
    <subcellularLocation>
        <location evidence="1 3 5">Nucleus</location>
    </subcellularLocation>
</comment>
<comment type="tissue specificity">
    <text evidence="3 4 5">Highly expressed in shoot apex.</text>
</comment>
<comment type="PTM">
    <text evidence="5">Phosphorylated at Thr-282 in a calcium-dependent manner by CPK6 and CPK33.</text>
</comment>
<comment type="similarity">
    <text evidence="8">Belongs to the bZIP family.</text>
</comment>
<comment type="sequence caution" evidence="8">
    <conflict type="erroneous gene model prediction">
        <sequence resource="EMBL-CDS" id="CAA18484"/>
    </conflict>
</comment>
<comment type="sequence caution" evidence="8">
    <conflict type="erroneous gene model prediction">
        <sequence resource="EMBL-CDS" id="CAA21476"/>
    </conflict>
</comment>
<comment type="sequence caution" evidence="8">
    <conflict type="erroneous gene model prediction">
        <sequence resource="EMBL-CDS" id="CAB81499"/>
    </conflict>
</comment>
<protein>
    <recommendedName>
        <fullName evidence="7">Protein FD</fullName>
    </recommendedName>
    <alternativeName>
        <fullName evidence="6">bZIP transcription factor 14</fullName>
        <shortName evidence="6">AtbZIP14</shortName>
    </alternativeName>
</protein>
<feature type="chain" id="PRO_0000245359" description="Protein FD">
    <location>
        <begin position="1"/>
        <end position="285"/>
    </location>
</feature>
<feature type="domain" description="bZIP" evidence="1">
    <location>
        <begin position="214"/>
        <end position="277"/>
    </location>
</feature>
<feature type="region of interest" description="Disordered" evidence="2">
    <location>
        <begin position="1"/>
        <end position="59"/>
    </location>
</feature>
<feature type="region of interest" description="Disordered" evidence="2">
    <location>
        <begin position="79"/>
        <end position="107"/>
    </location>
</feature>
<feature type="region of interest" description="Disordered" evidence="2">
    <location>
        <begin position="115"/>
        <end position="134"/>
    </location>
</feature>
<feature type="region of interest" description="Disordered" evidence="2">
    <location>
        <begin position="198"/>
        <end position="236"/>
    </location>
</feature>
<feature type="region of interest" description="Basic motif" evidence="1">
    <location>
        <begin position="216"/>
        <end position="235"/>
    </location>
</feature>
<feature type="region of interest" description="Leucine-zipper" evidence="1">
    <location>
        <begin position="242"/>
        <end position="263"/>
    </location>
</feature>
<feature type="region of interest" description="Disordered" evidence="2">
    <location>
        <begin position="257"/>
        <end position="285"/>
    </location>
</feature>
<feature type="compositionally biased region" description="Basic residues" evidence="2">
    <location>
        <begin position="1"/>
        <end position="12"/>
    </location>
</feature>
<feature type="compositionally biased region" description="Polar residues" evidence="2">
    <location>
        <begin position="13"/>
        <end position="25"/>
    </location>
</feature>
<feature type="compositionally biased region" description="Low complexity" evidence="2">
    <location>
        <begin position="26"/>
        <end position="50"/>
    </location>
</feature>
<feature type="compositionally biased region" description="Polar residues" evidence="2">
    <location>
        <begin position="98"/>
        <end position="107"/>
    </location>
</feature>
<feature type="compositionally biased region" description="Polar residues" evidence="2">
    <location>
        <begin position="272"/>
        <end position="285"/>
    </location>
</feature>
<feature type="modified residue" description="Phosphothreonine" evidence="5">
    <location>
        <position position="282"/>
    </location>
</feature>
<feature type="sequence variant" description="In strain: cv. No-0." evidence="3">
    <original>L</original>
    <variation>V</variation>
    <location>
        <position position="13"/>
    </location>
</feature>
<feature type="sequence variant" description="In strain: cv. Cvi-1 and cv. No-0." evidence="3">
    <original>K</original>
    <variation>N</variation>
    <location>
        <position position="112"/>
    </location>
</feature>
<feature type="sequence variant" description="In strain: cv. Cvi-1, cv. Landsberg erecta, cv. No-0 and cv. Wassilewskija." evidence="3">
    <original>Y</original>
    <variation>C</variation>
    <location>
        <position position="141"/>
    </location>
</feature>
<feature type="sequence variant" description="In strain: cv. Cvi-1 and cv. No-0." evidence="3">
    <original>E</original>
    <variation>D</variation>
    <location>
        <position position="161"/>
    </location>
</feature>
<feature type="mutagenesis site" description="No effect on phosphorylation. Loss of phosphorylation; when associated with A-282." evidence="5">
    <original>T</original>
    <variation>A</variation>
    <location>
        <position position="276"/>
    </location>
</feature>
<feature type="mutagenesis site" description="Loss of phosphorylation and loss of interaction with FD, GRF3 and GRF4. No effect on interaction with FD, GRF3 and GRF4; when associated with E-282." evidence="5">
    <original>L</original>
    <variation>Q</variation>
    <location>
        <position position="277"/>
    </location>
</feature>
<feature type="mutagenesis site" description="Loss of interaction with FT." evidence="3">
    <location>
        <begin position="279"/>
        <end position="285"/>
    </location>
</feature>
<feature type="mutagenesis site" description="Loss of phosphorylation and loss of interaction with FT. Loss of phosphorylation; when associated with A-276." evidence="3 5">
    <original>T</original>
    <variation>A</variation>
    <location>
        <position position="282"/>
    </location>
</feature>
<feature type="mutagenesis site" description="Normal interaction with FT. No effect on interaction with FD, GRF3 and GRF4; when associated with Q-277." evidence="5">
    <original>T</original>
    <variation>E</variation>
    <location>
        <position position="282"/>
    </location>
</feature>
<feature type="mutagenesis site" description="Normal interaction with FT." evidence="3">
    <original>T</original>
    <variation>S</variation>
    <location>
        <position position="282"/>
    </location>
</feature>
<gene>
    <name evidence="7" type="primary">FD</name>
    <name evidence="6" type="synonym">BZIP14</name>
    <name evidence="9" type="ordered locus">At4g35900</name>
    <name evidence="11" type="ORF">F4B14.170</name>
    <name evidence="10" type="ORF">T19K4.30</name>
</gene>
<sequence length="285" mass="31377">MLSSAKHQRNHRLSATNKNQTLTKVSSISSSSPSSSSSSSSTSSSSPLPSQDSQAQKRSLVTMEEVWNDINLASIHHLNRHSPHPQHNHEPRFRGQNHHNQNPNSIFQDFLKGSLNQEPAPTSQTTGSAPNGDSTTVTVLYSSPFPPPATVLSLNSGAGFEFLDNQDPLVTSNSNLHTHHHLSNAHAFNTSFEALVPSSSFGKKRGQDSNEGSGNRRHKRMIKNRESAARSRARKQAYTNELELEVAHLQAENARLKRQQDQLKMAAAIQQPKKNTLQRSSTAPF</sequence>
<reference key="1">
    <citation type="journal article" date="2005" name="Science">
        <title>FD, a bZIP protein mediating signals from the floral pathway integrator FT at the shoot apex.</title>
        <authorList>
            <person name="Abe M."/>
            <person name="Kobayashi Y."/>
            <person name="Yamamoto S."/>
            <person name="Daimon Y."/>
            <person name="Yamaguchi A."/>
            <person name="Ikeda Y."/>
            <person name="Ichinoki H."/>
            <person name="Notaguchi M."/>
            <person name="Goto K."/>
            <person name="Araki T."/>
        </authorList>
    </citation>
    <scope>NUCLEOTIDE SEQUENCE [GENOMIC DNA / MRNA]</scope>
    <scope>VARIANTS VAL-13; ASN-112; CYS-141 AND ASP-161</scope>
    <scope>FUNCTION</scope>
    <scope>SUBCELLULAR LOCATION</scope>
    <scope>INTERACTION WITH FDP/BZIP27 AND FT</scope>
    <scope>TISSUE SPECIFICITY</scope>
    <scope>MUTAGENESIS OF THR-282 AND 279-ARG--PHE-285</scope>
    <source>
        <strain>cv. Columbia</strain>
        <strain>cv. Cvi-1</strain>
        <strain>cv. Landsberg erecta</strain>
        <strain>cv. No-0</strain>
        <strain>cv. Wassilewskija</strain>
    </source>
</reference>
<reference key="2">
    <citation type="journal article" date="1999" name="Nature">
        <title>Sequence and analysis of chromosome 4 of the plant Arabidopsis thaliana.</title>
        <authorList>
            <person name="Mayer K.F.X."/>
            <person name="Schueller C."/>
            <person name="Wambutt R."/>
            <person name="Murphy G."/>
            <person name="Volckaert G."/>
            <person name="Pohl T."/>
            <person name="Duesterhoeft A."/>
            <person name="Stiekema W."/>
            <person name="Entian K.-D."/>
            <person name="Terryn N."/>
            <person name="Harris B."/>
            <person name="Ansorge W."/>
            <person name="Brandt P."/>
            <person name="Grivell L.A."/>
            <person name="Rieger M."/>
            <person name="Weichselgartner M."/>
            <person name="de Simone V."/>
            <person name="Obermaier B."/>
            <person name="Mache R."/>
            <person name="Mueller M."/>
            <person name="Kreis M."/>
            <person name="Delseny M."/>
            <person name="Puigdomenech P."/>
            <person name="Watson M."/>
            <person name="Schmidtheini T."/>
            <person name="Reichert B."/>
            <person name="Portetelle D."/>
            <person name="Perez-Alonso M."/>
            <person name="Boutry M."/>
            <person name="Bancroft I."/>
            <person name="Vos P."/>
            <person name="Hoheisel J."/>
            <person name="Zimmermann W."/>
            <person name="Wedler H."/>
            <person name="Ridley P."/>
            <person name="Langham S.-A."/>
            <person name="McCullagh B."/>
            <person name="Bilham L."/>
            <person name="Robben J."/>
            <person name="van der Schueren J."/>
            <person name="Grymonprez B."/>
            <person name="Chuang Y.-J."/>
            <person name="Vandenbussche F."/>
            <person name="Braeken M."/>
            <person name="Weltjens I."/>
            <person name="Voet M."/>
            <person name="Bastiaens I."/>
            <person name="Aert R."/>
            <person name="Defoor E."/>
            <person name="Weitzenegger T."/>
            <person name="Bothe G."/>
            <person name="Ramsperger U."/>
            <person name="Hilbert H."/>
            <person name="Braun M."/>
            <person name="Holzer E."/>
            <person name="Brandt A."/>
            <person name="Peters S."/>
            <person name="van Staveren M."/>
            <person name="Dirkse W."/>
            <person name="Mooijman P."/>
            <person name="Klein Lankhorst R."/>
            <person name="Rose M."/>
            <person name="Hauf J."/>
            <person name="Koetter P."/>
            <person name="Berneiser S."/>
            <person name="Hempel S."/>
            <person name="Feldpausch M."/>
            <person name="Lamberth S."/>
            <person name="Van den Daele H."/>
            <person name="De Keyser A."/>
            <person name="Buysshaert C."/>
            <person name="Gielen J."/>
            <person name="Villarroel R."/>
            <person name="De Clercq R."/>
            <person name="van Montagu M."/>
            <person name="Rogers J."/>
            <person name="Cronin A."/>
            <person name="Quail M.A."/>
            <person name="Bray-Allen S."/>
            <person name="Clark L."/>
            <person name="Doggett J."/>
            <person name="Hall S."/>
            <person name="Kay M."/>
            <person name="Lennard N."/>
            <person name="McLay K."/>
            <person name="Mayes R."/>
            <person name="Pettett A."/>
            <person name="Rajandream M.A."/>
            <person name="Lyne M."/>
            <person name="Benes V."/>
            <person name="Rechmann S."/>
            <person name="Borkova D."/>
            <person name="Bloecker H."/>
            <person name="Scharfe M."/>
            <person name="Grimm M."/>
            <person name="Loehnert T.-H."/>
            <person name="Dose S."/>
            <person name="de Haan M."/>
            <person name="Maarse A.C."/>
            <person name="Schaefer M."/>
            <person name="Mueller-Auer S."/>
            <person name="Gabel C."/>
            <person name="Fuchs M."/>
            <person name="Fartmann B."/>
            <person name="Granderath K."/>
            <person name="Dauner D."/>
            <person name="Herzl A."/>
            <person name="Neumann S."/>
            <person name="Argiriou A."/>
            <person name="Vitale D."/>
            <person name="Liguori R."/>
            <person name="Piravandi E."/>
            <person name="Massenet O."/>
            <person name="Quigley F."/>
            <person name="Clabauld G."/>
            <person name="Muendlein A."/>
            <person name="Felber R."/>
            <person name="Schnabl S."/>
            <person name="Hiller R."/>
            <person name="Schmidt W."/>
            <person name="Lecharny A."/>
            <person name="Aubourg S."/>
            <person name="Chefdor F."/>
            <person name="Cooke R."/>
            <person name="Berger C."/>
            <person name="Monfort A."/>
            <person name="Casacuberta E."/>
            <person name="Gibbons T."/>
            <person name="Weber N."/>
            <person name="Vandenbol M."/>
            <person name="Bargues M."/>
            <person name="Terol J."/>
            <person name="Torres A."/>
            <person name="Perez-Perez A."/>
            <person name="Purnelle B."/>
            <person name="Bent E."/>
            <person name="Johnson S."/>
            <person name="Tacon D."/>
            <person name="Jesse T."/>
            <person name="Heijnen L."/>
            <person name="Schwarz S."/>
            <person name="Scholler P."/>
            <person name="Heber S."/>
            <person name="Francs P."/>
            <person name="Bielke C."/>
            <person name="Frishman D."/>
            <person name="Haase D."/>
            <person name="Lemcke K."/>
            <person name="Mewes H.-W."/>
            <person name="Stocker S."/>
            <person name="Zaccaria P."/>
            <person name="Bevan M."/>
            <person name="Wilson R.K."/>
            <person name="de la Bastide M."/>
            <person name="Habermann K."/>
            <person name="Parnell L."/>
            <person name="Dedhia N."/>
            <person name="Gnoj L."/>
            <person name="Schutz K."/>
            <person name="Huang E."/>
            <person name="Spiegel L."/>
            <person name="Sekhon M."/>
            <person name="Murray J."/>
            <person name="Sheet P."/>
            <person name="Cordes M."/>
            <person name="Abu-Threideh J."/>
            <person name="Stoneking T."/>
            <person name="Kalicki J."/>
            <person name="Graves T."/>
            <person name="Harmon G."/>
            <person name="Edwards J."/>
            <person name="Latreille P."/>
            <person name="Courtney L."/>
            <person name="Cloud J."/>
            <person name="Abbott A."/>
            <person name="Scott K."/>
            <person name="Johnson D."/>
            <person name="Minx P."/>
            <person name="Bentley D."/>
            <person name="Fulton B."/>
            <person name="Miller N."/>
            <person name="Greco T."/>
            <person name="Kemp K."/>
            <person name="Kramer J."/>
            <person name="Fulton L."/>
            <person name="Mardis E."/>
            <person name="Dante M."/>
            <person name="Pepin K."/>
            <person name="Hillier L.W."/>
            <person name="Nelson J."/>
            <person name="Spieth J."/>
            <person name="Ryan E."/>
            <person name="Andrews S."/>
            <person name="Geisel C."/>
            <person name="Layman D."/>
            <person name="Du H."/>
            <person name="Ali J."/>
            <person name="Berghoff A."/>
            <person name="Jones K."/>
            <person name="Drone K."/>
            <person name="Cotton M."/>
            <person name="Joshu C."/>
            <person name="Antonoiu B."/>
            <person name="Zidanic M."/>
            <person name="Strong C."/>
            <person name="Sun H."/>
            <person name="Lamar B."/>
            <person name="Yordan C."/>
            <person name="Ma P."/>
            <person name="Zhong J."/>
            <person name="Preston R."/>
            <person name="Vil D."/>
            <person name="Shekher M."/>
            <person name="Matero A."/>
            <person name="Shah R."/>
            <person name="Swaby I.K."/>
            <person name="O'Shaughnessy A."/>
            <person name="Rodriguez M."/>
            <person name="Hoffman J."/>
            <person name="Till S."/>
            <person name="Granat S."/>
            <person name="Shohdy N."/>
            <person name="Hasegawa A."/>
            <person name="Hameed A."/>
            <person name="Lodhi M."/>
            <person name="Johnson A."/>
            <person name="Chen E."/>
            <person name="Marra M.A."/>
            <person name="Martienssen R."/>
            <person name="McCombie W.R."/>
        </authorList>
    </citation>
    <scope>NUCLEOTIDE SEQUENCE [LARGE SCALE GENOMIC DNA]</scope>
    <source>
        <strain>cv. Columbia</strain>
    </source>
</reference>
<reference key="3">
    <citation type="journal article" date="2017" name="Plant J.">
        <title>Araport11: a complete reannotation of the Arabidopsis thaliana reference genome.</title>
        <authorList>
            <person name="Cheng C.Y."/>
            <person name="Krishnakumar V."/>
            <person name="Chan A.P."/>
            <person name="Thibaud-Nissen F."/>
            <person name="Schobel S."/>
            <person name="Town C.D."/>
        </authorList>
    </citation>
    <scope>GENOME REANNOTATION</scope>
    <source>
        <strain>cv. Columbia</strain>
    </source>
</reference>
<reference key="4">
    <citation type="journal article" date="2002" name="Plant Cell">
        <title>The homologous ABI5 and EEL transcription factors function antagonistically to fine-tune gene expression during late embryogenesis.</title>
        <authorList>
            <person name="Bensmihen S."/>
            <person name="Rippa S."/>
            <person name="Lambert G."/>
            <person name="Jublot D."/>
            <person name="Pautot V."/>
            <person name="Granier F."/>
            <person name="Giraudat J."/>
            <person name="Parcy F."/>
        </authorList>
    </citation>
    <scope>IDENTIFICATION</scope>
</reference>
<reference key="5">
    <citation type="journal article" date="2002" name="Trends Plant Sci.">
        <title>bZIP transcription factors in Arabidopsis.</title>
        <authorList>
            <person name="Jakoby M."/>
            <person name="Weisshaar B."/>
            <person name="Droege-Laser W."/>
            <person name="Vicente-Carbajosa J."/>
            <person name="Tiedemann J."/>
            <person name="Kroj T."/>
            <person name="Parcy F."/>
        </authorList>
    </citation>
    <scope>GENE FAMILY</scope>
    <scope>NOMENCLATURE</scope>
</reference>
<reference key="6">
    <citation type="journal article" date="2005" name="Science">
        <title>Integration of spatial and temporal information during floral induction in Arabidopsis.</title>
        <authorList>
            <person name="Wigge P.A."/>
            <person name="Kim M.C."/>
            <person name="Jaeger K.-E."/>
            <person name="Busch W."/>
            <person name="Schmid M."/>
            <person name="Lohmann J.U."/>
            <person name="Weigel D."/>
        </authorList>
    </citation>
    <scope>FUNCTION</scope>
    <scope>TISSUE SPECIFICITY</scope>
    <scope>INTERACTION WITH FT</scope>
</reference>
<reference key="7">
    <citation type="journal article" date="2015" name="Sci. Rep.">
        <title>Calcium-dependent protein kinases responsible for the phosphorylation of a bZIP transcription factor FD crucial for the florigen complex formation.</title>
        <authorList>
            <person name="Kawamoto N."/>
            <person name="Sasabe M."/>
            <person name="Endo M."/>
            <person name="Machida Y."/>
            <person name="Araki T."/>
        </authorList>
    </citation>
    <scope>MUTAGENESIS OF THR-276; LEU-277 AND THR-282</scope>
    <scope>PHOSPHORYLATION AT THR-282</scope>
    <scope>INTERACTION WITH FT; CPK6; CPK33; GRF3 AND GRF4</scope>
    <scope>SUBCELLULAR LOCATION</scope>
    <scope>TISSUE SPECIFICITY</scope>
</reference>